<evidence type="ECO:0000255" key="1">
    <source>
        <dbReference type="HAMAP-Rule" id="MF_00005"/>
    </source>
</evidence>
<protein>
    <recommendedName>
        <fullName evidence="1">Argininosuccinate synthase</fullName>
        <ecNumber evidence="1">6.3.4.5</ecNumber>
    </recommendedName>
    <alternativeName>
        <fullName evidence="1">Citrulline--aspartate ligase</fullName>
    </alternativeName>
</protein>
<keyword id="KW-0028">Amino-acid biosynthesis</keyword>
<keyword id="KW-0055">Arginine biosynthesis</keyword>
<keyword id="KW-0067">ATP-binding</keyword>
<keyword id="KW-0963">Cytoplasm</keyword>
<keyword id="KW-0436">Ligase</keyword>
<keyword id="KW-0547">Nucleotide-binding</keyword>
<keyword id="KW-1185">Reference proteome</keyword>
<proteinExistence type="inferred from homology"/>
<reference key="1">
    <citation type="journal article" date="2002" name="J. Bacteriol.">
        <title>Whole-genome comparison of Mycobacterium tuberculosis clinical and laboratory strains.</title>
        <authorList>
            <person name="Fleischmann R.D."/>
            <person name="Alland D."/>
            <person name="Eisen J.A."/>
            <person name="Carpenter L."/>
            <person name="White O."/>
            <person name="Peterson J.D."/>
            <person name="DeBoy R.T."/>
            <person name="Dodson R.J."/>
            <person name="Gwinn M.L."/>
            <person name="Haft D.H."/>
            <person name="Hickey E.K."/>
            <person name="Kolonay J.F."/>
            <person name="Nelson W.C."/>
            <person name="Umayam L.A."/>
            <person name="Ermolaeva M.D."/>
            <person name="Salzberg S.L."/>
            <person name="Delcher A."/>
            <person name="Utterback T.R."/>
            <person name="Weidman J.F."/>
            <person name="Khouri H.M."/>
            <person name="Gill J."/>
            <person name="Mikula A."/>
            <person name="Bishai W."/>
            <person name="Jacobs W.R. Jr."/>
            <person name="Venter J.C."/>
            <person name="Fraser C.M."/>
        </authorList>
    </citation>
    <scope>NUCLEOTIDE SEQUENCE [LARGE SCALE GENOMIC DNA]</scope>
    <source>
        <strain>CDC 1551 / Oshkosh</strain>
    </source>
</reference>
<gene>
    <name evidence="1" type="primary">argG</name>
    <name type="ordered locus">MT1696</name>
</gene>
<organism>
    <name type="scientific">Mycobacterium tuberculosis (strain CDC 1551 / Oshkosh)</name>
    <dbReference type="NCBI Taxonomy" id="83331"/>
    <lineage>
        <taxon>Bacteria</taxon>
        <taxon>Bacillati</taxon>
        <taxon>Actinomycetota</taxon>
        <taxon>Actinomycetes</taxon>
        <taxon>Mycobacteriales</taxon>
        <taxon>Mycobacteriaceae</taxon>
        <taxon>Mycobacterium</taxon>
        <taxon>Mycobacterium tuberculosis complex</taxon>
    </lineage>
</organism>
<dbReference type="EC" id="6.3.4.5" evidence="1"/>
<dbReference type="EMBL" id="AE000516">
    <property type="protein sequence ID" value="AAK45965.1"/>
    <property type="molecule type" value="Genomic_DNA"/>
</dbReference>
<dbReference type="PIR" id="E70621">
    <property type="entry name" value="E70621"/>
</dbReference>
<dbReference type="RefSeq" id="WP_003408179.1">
    <property type="nucleotide sequence ID" value="NZ_KK341227.1"/>
</dbReference>
<dbReference type="SMR" id="P9WPW6"/>
<dbReference type="KEGG" id="mtc:MT1696"/>
<dbReference type="PATRIC" id="fig|83331.31.peg.1823"/>
<dbReference type="HOGENOM" id="CLU_032784_4_2_11"/>
<dbReference type="UniPathway" id="UPA00068">
    <property type="reaction ID" value="UER00113"/>
</dbReference>
<dbReference type="Proteomes" id="UP000001020">
    <property type="component" value="Chromosome"/>
</dbReference>
<dbReference type="GO" id="GO:0005737">
    <property type="term" value="C:cytoplasm"/>
    <property type="evidence" value="ECO:0007669"/>
    <property type="project" value="UniProtKB-SubCell"/>
</dbReference>
<dbReference type="GO" id="GO:0004055">
    <property type="term" value="F:argininosuccinate synthase activity"/>
    <property type="evidence" value="ECO:0007669"/>
    <property type="project" value="UniProtKB-UniRule"/>
</dbReference>
<dbReference type="GO" id="GO:0005524">
    <property type="term" value="F:ATP binding"/>
    <property type="evidence" value="ECO:0007669"/>
    <property type="project" value="UniProtKB-UniRule"/>
</dbReference>
<dbReference type="GO" id="GO:0000053">
    <property type="term" value="P:argininosuccinate metabolic process"/>
    <property type="evidence" value="ECO:0007669"/>
    <property type="project" value="TreeGrafter"/>
</dbReference>
<dbReference type="GO" id="GO:0006526">
    <property type="term" value="P:L-arginine biosynthetic process"/>
    <property type="evidence" value="ECO:0007669"/>
    <property type="project" value="UniProtKB-UniRule"/>
</dbReference>
<dbReference type="GO" id="GO:0000050">
    <property type="term" value="P:urea cycle"/>
    <property type="evidence" value="ECO:0007669"/>
    <property type="project" value="TreeGrafter"/>
</dbReference>
<dbReference type="CDD" id="cd01999">
    <property type="entry name" value="ASS"/>
    <property type="match status" value="1"/>
</dbReference>
<dbReference type="FunFam" id="3.40.50.620:FF:000038">
    <property type="entry name" value="Argininosuccinate synthase"/>
    <property type="match status" value="1"/>
</dbReference>
<dbReference type="FunFam" id="3.90.1260.10:FF:000006">
    <property type="entry name" value="Argininosuccinate synthase"/>
    <property type="match status" value="1"/>
</dbReference>
<dbReference type="Gene3D" id="3.90.1260.10">
    <property type="entry name" value="Argininosuccinate synthetase, chain A, domain 2"/>
    <property type="match status" value="1"/>
</dbReference>
<dbReference type="Gene3D" id="3.40.50.620">
    <property type="entry name" value="HUPs"/>
    <property type="match status" value="1"/>
</dbReference>
<dbReference type="Gene3D" id="1.20.5.470">
    <property type="entry name" value="Single helix bin"/>
    <property type="match status" value="1"/>
</dbReference>
<dbReference type="HAMAP" id="MF_00005">
    <property type="entry name" value="Arg_succ_synth_type1"/>
    <property type="match status" value="1"/>
</dbReference>
<dbReference type="InterPro" id="IPR048268">
    <property type="entry name" value="Arginosuc_syn_C"/>
</dbReference>
<dbReference type="InterPro" id="IPR048267">
    <property type="entry name" value="Arginosuc_syn_N"/>
</dbReference>
<dbReference type="InterPro" id="IPR001518">
    <property type="entry name" value="Arginosuc_synth"/>
</dbReference>
<dbReference type="InterPro" id="IPR018223">
    <property type="entry name" value="Arginosuc_synth_CS"/>
</dbReference>
<dbReference type="InterPro" id="IPR023434">
    <property type="entry name" value="Arginosuc_synth_type_1_subfam"/>
</dbReference>
<dbReference type="InterPro" id="IPR024074">
    <property type="entry name" value="AS_cat/multimer_dom_body"/>
</dbReference>
<dbReference type="InterPro" id="IPR014729">
    <property type="entry name" value="Rossmann-like_a/b/a_fold"/>
</dbReference>
<dbReference type="NCBIfam" id="TIGR00032">
    <property type="entry name" value="argG"/>
    <property type="match status" value="1"/>
</dbReference>
<dbReference type="NCBIfam" id="NF001770">
    <property type="entry name" value="PRK00509.1"/>
    <property type="match status" value="1"/>
</dbReference>
<dbReference type="PANTHER" id="PTHR11587">
    <property type="entry name" value="ARGININOSUCCINATE SYNTHASE"/>
    <property type="match status" value="1"/>
</dbReference>
<dbReference type="PANTHER" id="PTHR11587:SF2">
    <property type="entry name" value="ARGININOSUCCINATE SYNTHASE"/>
    <property type="match status" value="1"/>
</dbReference>
<dbReference type="Pfam" id="PF20979">
    <property type="entry name" value="Arginosuc_syn_C"/>
    <property type="match status" value="1"/>
</dbReference>
<dbReference type="Pfam" id="PF00764">
    <property type="entry name" value="Arginosuc_synth"/>
    <property type="match status" value="1"/>
</dbReference>
<dbReference type="SUPFAM" id="SSF52402">
    <property type="entry name" value="Adenine nucleotide alpha hydrolases-like"/>
    <property type="match status" value="1"/>
</dbReference>
<dbReference type="SUPFAM" id="SSF69864">
    <property type="entry name" value="Argininosuccinate synthetase, C-terminal domain"/>
    <property type="match status" value="1"/>
</dbReference>
<dbReference type="PROSITE" id="PS00564">
    <property type="entry name" value="ARGININOSUCCIN_SYN_1"/>
    <property type="match status" value="1"/>
</dbReference>
<dbReference type="PROSITE" id="PS00565">
    <property type="entry name" value="ARGININOSUCCIN_SYN_2"/>
    <property type="match status" value="1"/>
</dbReference>
<comment type="catalytic activity">
    <reaction evidence="1">
        <text>L-citrulline + L-aspartate + ATP = 2-(N(omega)-L-arginino)succinate + AMP + diphosphate + H(+)</text>
        <dbReference type="Rhea" id="RHEA:10932"/>
        <dbReference type="ChEBI" id="CHEBI:15378"/>
        <dbReference type="ChEBI" id="CHEBI:29991"/>
        <dbReference type="ChEBI" id="CHEBI:30616"/>
        <dbReference type="ChEBI" id="CHEBI:33019"/>
        <dbReference type="ChEBI" id="CHEBI:57472"/>
        <dbReference type="ChEBI" id="CHEBI:57743"/>
        <dbReference type="ChEBI" id="CHEBI:456215"/>
        <dbReference type="EC" id="6.3.4.5"/>
    </reaction>
</comment>
<comment type="pathway">
    <text evidence="1">Amino-acid biosynthesis; L-arginine biosynthesis; L-arginine from L-ornithine and carbamoyl phosphate: step 2/3.</text>
</comment>
<comment type="subunit">
    <text evidence="1">Homotetramer.</text>
</comment>
<comment type="subcellular location">
    <subcellularLocation>
        <location evidence="1">Cytoplasm</location>
    </subcellularLocation>
</comment>
<comment type="similarity">
    <text evidence="1">Belongs to the argininosuccinate synthase family. Type 1 subfamily.</text>
</comment>
<feature type="chain" id="PRO_0000426880" description="Argininosuccinate synthase">
    <location>
        <begin position="1"/>
        <end position="398"/>
    </location>
</feature>
<feature type="binding site" evidence="1">
    <location>
        <begin position="8"/>
        <end position="16"/>
    </location>
    <ligand>
        <name>ATP</name>
        <dbReference type="ChEBI" id="CHEBI:30616"/>
    </ligand>
</feature>
<feature type="binding site" evidence="1">
    <location>
        <position position="87"/>
    </location>
    <ligand>
        <name>L-citrulline</name>
        <dbReference type="ChEBI" id="CHEBI:57743"/>
    </ligand>
</feature>
<feature type="binding site" evidence="1">
    <location>
        <position position="117"/>
    </location>
    <ligand>
        <name>ATP</name>
        <dbReference type="ChEBI" id="CHEBI:30616"/>
    </ligand>
</feature>
<feature type="binding site" evidence="1">
    <location>
        <position position="119"/>
    </location>
    <ligand>
        <name>L-aspartate</name>
        <dbReference type="ChEBI" id="CHEBI:29991"/>
    </ligand>
</feature>
<feature type="binding site" evidence="1">
    <location>
        <position position="123"/>
    </location>
    <ligand>
        <name>L-aspartate</name>
        <dbReference type="ChEBI" id="CHEBI:29991"/>
    </ligand>
</feature>
<feature type="binding site" evidence="1">
    <location>
        <position position="123"/>
    </location>
    <ligand>
        <name>L-citrulline</name>
        <dbReference type="ChEBI" id="CHEBI:57743"/>
    </ligand>
</feature>
<feature type="binding site" evidence="1">
    <location>
        <position position="124"/>
    </location>
    <ligand>
        <name>L-aspartate</name>
        <dbReference type="ChEBI" id="CHEBI:29991"/>
    </ligand>
</feature>
<feature type="binding site" evidence="1">
    <location>
        <position position="127"/>
    </location>
    <ligand>
        <name>L-citrulline</name>
        <dbReference type="ChEBI" id="CHEBI:57743"/>
    </ligand>
</feature>
<feature type="binding site" evidence="1">
    <location>
        <position position="175"/>
    </location>
    <ligand>
        <name>L-citrulline</name>
        <dbReference type="ChEBI" id="CHEBI:57743"/>
    </ligand>
</feature>
<feature type="binding site" evidence="1">
    <location>
        <position position="260"/>
    </location>
    <ligand>
        <name>L-citrulline</name>
        <dbReference type="ChEBI" id="CHEBI:57743"/>
    </ligand>
</feature>
<feature type="binding site" evidence="1">
    <location>
        <position position="272"/>
    </location>
    <ligand>
        <name>L-citrulline</name>
        <dbReference type="ChEBI" id="CHEBI:57743"/>
    </ligand>
</feature>
<accession>P9WPW6</accession>
<accession>L0TA96</accession>
<accession>P63642</accession>
<accession>P94993</accession>
<sequence>MSERVILAYSGGLDTSVAISWIGKETGREVVAVAIDLGQGGEHMDVIRQRALDCGAVEAVVVDARDEFAEGYCLPTVLNNALYMDRYPLVSAISRPLIVKHLVAAAREHGGGIVAHGCTGKGNDQVRFEVGFASLAPDLEVLAPVRDYAWTREKAIAFAEENAIPINVTKRSPFSIDQNVWGRAVETGFLEHLWNAPTKDIYAYTEDPTINWGVPDEVIVGFERGVPVSVDGKPVSMLAAIEELNRRAGAQGVGRLDVVEDRLVGIKSREIYEAPGAMVLITAHTELEHVTLERELGRFKRQTDQRWAELVYDGLWYSPLKAALEAFVAKTQEHVSGEVRLVLHGGHIAVNGRRSAESLYDFNLATYDEGDSFDQSAARGFVYVHGLSSKLAARRDLR</sequence>
<name>ASSY_MYCTO</name>